<reference key="1">
    <citation type="journal article" date="2009" name="PLoS Genet.">
        <title>Organised genome dynamics in the Escherichia coli species results in highly diverse adaptive paths.</title>
        <authorList>
            <person name="Touchon M."/>
            <person name="Hoede C."/>
            <person name="Tenaillon O."/>
            <person name="Barbe V."/>
            <person name="Baeriswyl S."/>
            <person name="Bidet P."/>
            <person name="Bingen E."/>
            <person name="Bonacorsi S."/>
            <person name="Bouchier C."/>
            <person name="Bouvet O."/>
            <person name="Calteau A."/>
            <person name="Chiapello H."/>
            <person name="Clermont O."/>
            <person name="Cruveiller S."/>
            <person name="Danchin A."/>
            <person name="Diard M."/>
            <person name="Dossat C."/>
            <person name="Karoui M.E."/>
            <person name="Frapy E."/>
            <person name="Garry L."/>
            <person name="Ghigo J.M."/>
            <person name="Gilles A.M."/>
            <person name="Johnson J."/>
            <person name="Le Bouguenec C."/>
            <person name="Lescat M."/>
            <person name="Mangenot S."/>
            <person name="Martinez-Jehanne V."/>
            <person name="Matic I."/>
            <person name="Nassif X."/>
            <person name="Oztas S."/>
            <person name="Petit M.A."/>
            <person name="Pichon C."/>
            <person name="Rouy Z."/>
            <person name="Ruf C.S."/>
            <person name="Schneider D."/>
            <person name="Tourret J."/>
            <person name="Vacherie B."/>
            <person name="Vallenet D."/>
            <person name="Medigue C."/>
            <person name="Rocha E.P.C."/>
            <person name="Denamur E."/>
        </authorList>
    </citation>
    <scope>NUCLEOTIDE SEQUENCE [LARGE SCALE GENOMIC DNA]</scope>
    <source>
        <strain>IAI39 / ExPEC</strain>
    </source>
</reference>
<sequence length="302" mass="35188">MDQIRLTHLRQLEAESIHIIREVAAEFSNPVMLYSIGKDSSVMLHLARKAFYPGTLPFPLLHVDTGWKFREMYEFRDRTAKAYGCELLVHKNPEGVAMGINPFVHGSAKHTDIMKTEGLKQALNKYGFDAAFGGARRDEEKSRAKERIYSFRDRFHRWDPKNQRPELWHNYNGQINKGESIRVFPLSNWTEQDIWQYIWLENIDIVPLYLAAERPVLERDGMLMMIDDNRIDLQPGEVIKKRMVRFRTLGCWPLTGAVESNAQTLPEIIEEMLVSTTSERQGRVIDRDQAGSMELKKRQGYF</sequence>
<comment type="function">
    <text evidence="1">With CysN forms the ATP sulfurylase (ATPS) that catalyzes the adenylation of sulfate producing adenosine 5'-phosphosulfate (APS) and diphosphate, the first enzymatic step in sulfur assimilation pathway. APS synthesis involves the formation of a high-energy phosphoric-sulfuric acid anhydride bond driven by GTP hydrolysis by CysN coupled to ATP hydrolysis by CysD.</text>
</comment>
<comment type="catalytic activity">
    <reaction evidence="1">
        <text>sulfate + ATP + H(+) = adenosine 5'-phosphosulfate + diphosphate</text>
        <dbReference type="Rhea" id="RHEA:18133"/>
        <dbReference type="ChEBI" id="CHEBI:15378"/>
        <dbReference type="ChEBI" id="CHEBI:16189"/>
        <dbReference type="ChEBI" id="CHEBI:30616"/>
        <dbReference type="ChEBI" id="CHEBI:33019"/>
        <dbReference type="ChEBI" id="CHEBI:58243"/>
        <dbReference type="EC" id="2.7.7.4"/>
    </reaction>
</comment>
<comment type="pathway">
    <text evidence="1">Sulfur metabolism; hydrogen sulfide biosynthesis; sulfite from sulfate: step 1/3.</text>
</comment>
<comment type="subunit">
    <text evidence="1">Heterodimer composed of CysD, the smaller subunit, and CysN.</text>
</comment>
<comment type="similarity">
    <text evidence="1">Belongs to the PAPS reductase family. CysD subfamily.</text>
</comment>
<gene>
    <name evidence="1" type="primary">cysD</name>
    <name type="ordered locus">ECIAI39_2941</name>
</gene>
<proteinExistence type="inferred from homology"/>
<dbReference type="EC" id="2.7.7.4" evidence="1"/>
<dbReference type="EMBL" id="CU928164">
    <property type="protein sequence ID" value="CAR19060.1"/>
    <property type="molecule type" value="Genomic_DNA"/>
</dbReference>
<dbReference type="RefSeq" id="WP_000372108.1">
    <property type="nucleotide sequence ID" value="NC_011750.1"/>
</dbReference>
<dbReference type="RefSeq" id="YP_002408872.1">
    <property type="nucleotide sequence ID" value="NC_011750.1"/>
</dbReference>
<dbReference type="SMR" id="B7NT96"/>
<dbReference type="STRING" id="585057.ECIAI39_2941"/>
<dbReference type="GeneID" id="93779254"/>
<dbReference type="KEGG" id="ect:ECIAI39_2941"/>
<dbReference type="PATRIC" id="fig|585057.6.peg.3050"/>
<dbReference type="HOGENOM" id="CLU_043026_0_0_6"/>
<dbReference type="UniPathway" id="UPA00140">
    <property type="reaction ID" value="UER00204"/>
</dbReference>
<dbReference type="Proteomes" id="UP000000749">
    <property type="component" value="Chromosome"/>
</dbReference>
<dbReference type="GO" id="GO:0005524">
    <property type="term" value="F:ATP binding"/>
    <property type="evidence" value="ECO:0007669"/>
    <property type="project" value="UniProtKB-KW"/>
</dbReference>
<dbReference type="GO" id="GO:0004781">
    <property type="term" value="F:sulfate adenylyltransferase (ATP) activity"/>
    <property type="evidence" value="ECO:0007669"/>
    <property type="project" value="UniProtKB-UniRule"/>
</dbReference>
<dbReference type="GO" id="GO:0070814">
    <property type="term" value="P:hydrogen sulfide biosynthetic process"/>
    <property type="evidence" value="ECO:0007669"/>
    <property type="project" value="UniProtKB-UniRule"/>
</dbReference>
<dbReference type="GO" id="GO:0000103">
    <property type="term" value="P:sulfate assimilation"/>
    <property type="evidence" value="ECO:0007669"/>
    <property type="project" value="UniProtKB-UniRule"/>
</dbReference>
<dbReference type="CDD" id="cd23946">
    <property type="entry name" value="Sulfate_adenylyltransferase_2"/>
    <property type="match status" value="1"/>
</dbReference>
<dbReference type="FunFam" id="3.40.50.620:FF:000002">
    <property type="entry name" value="Sulfate adenylyltransferase subunit 2"/>
    <property type="match status" value="1"/>
</dbReference>
<dbReference type="Gene3D" id="3.40.50.620">
    <property type="entry name" value="HUPs"/>
    <property type="match status" value="1"/>
</dbReference>
<dbReference type="HAMAP" id="MF_00064">
    <property type="entry name" value="Sulf_adenylyltr_sub2"/>
    <property type="match status" value="1"/>
</dbReference>
<dbReference type="InterPro" id="IPR002500">
    <property type="entry name" value="PAPS_reduct_dom"/>
</dbReference>
<dbReference type="InterPro" id="IPR014729">
    <property type="entry name" value="Rossmann-like_a/b/a_fold"/>
</dbReference>
<dbReference type="InterPro" id="IPR011784">
    <property type="entry name" value="SO4_adenylTrfase_ssu"/>
</dbReference>
<dbReference type="InterPro" id="IPR050128">
    <property type="entry name" value="Sulfate_adenylyltrnsfr_sub2"/>
</dbReference>
<dbReference type="NCBIfam" id="TIGR02039">
    <property type="entry name" value="CysD"/>
    <property type="match status" value="1"/>
</dbReference>
<dbReference type="NCBIfam" id="NF003587">
    <property type="entry name" value="PRK05253.1"/>
    <property type="match status" value="1"/>
</dbReference>
<dbReference type="NCBIfam" id="NF009214">
    <property type="entry name" value="PRK12563.1"/>
    <property type="match status" value="1"/>
</dbReference>
<dbReference type="PANTHER" id="PTHR43196">
    <property type="entry name" value="SULFATE ADENYLYLTRANSFERASE SUBUNIT 2"/>
    <property type="match status" value="1"/>
</dbReference>
<dbReference type="PANTHER" id="PTHR43196:SF1">
    <property type="entry name" value="SULFATE ADENYLYLTRANSFERASE SUBUNIT 2"/>
    <property type="match status" value="1"/>
</dbReference>
<dbReference type="Pfam" id="PF01507">
    <property type="entry name" value="PAPS_reduct"/>
    <property type="match status" value="1"/>
</dbReference>
<dbReference type="PIRSF" id="PIRSF002936">
    <property type="entry name" value="CysDAde_trans"/>
    <property type="match status" value="1"/>
</dbReference>
<dbReference type="SUPFAM" id="SSF52402">
    <property type="entry name" value="Adenine nucleotide alpha hydrolases-like"/>
    <property type="match status" value="1"/>
</dbReference>
<evidence type="ECO:0000255" key="1">
    <source>
        <dbReference type="HAMAP-Rule" id="MF_00064"/>
    </source>
</evidence>
<name>CYSD_ECO7I</name>
<accession>B7NT96</accession>
<organism>
    <name type="scientific">Escherichia coli O7:K1 (strain IAI39 / ExPEC)</name>
    <dbReference type="NCBI Taxonomy" id="585057"/>
    <lineage>
        <taxon>Bacteria</taxon>
        <taxon>Pseudomonadati</taxon>
        <taxon>Pseudomonadota</taxon>
        <taxon>Gammaproteobacteria</taxon>
        <taxon>Enterobacterales</taxon>
        <taxon>Enterobacteriaceae</taxon>
        <taxon>Escherichia</taxon>
    </lineage>
</organism>
<feature type="chain" id="PRO_1000116957" description="Sulfate adenylyltransferase subunit 2">
    <location>
        <begin position="1"/>
        <end position="302"/>
    </location>
</feature>
<keyword id="KW-0067">ATP-binding</keyword>
<keyword id="KW-0547">Nucleotide-binding</keyword>
<keyword id="KW-0548">Nucleotidyltransferase</keyword>
<keyword id="KW-0808">Transferase</keyword>
<protein>
    <recommendedName>
        <fullName evidence="1">Sulfate adenylyltransferase subunit 2</fullName>
        <ecNumber evidence="1">2.7.7.4</ecNumber>
    </recommendedName>
    <alternativeName>
        <fullName evidence="1">ATP-sulfurylase small subunit</fullName>
    </alternativeName>
    <alternativeName>
        <fullName evidence="1">Sulfate adenylate transferase</fullName>
        <shortName evidence="1">SAT</shortName>
    </alternativeName>
</protein>